<reference key="1">
    <citation type="journal article" date="2003" name="Nucleic Acids Res.">
        <title>Genome sequence of Chlamydophila caviae (Chlamydia psittaci GPIC): examining the role of niche-specific genes in the evolution of the Chlamydiaceae.</title>
        <authorList>
            <person name="Read T.D."/>
            <person name="Myers G.S.A."/>
            <person name="Brunham R.C."/>
            <person name="Nelson W.C."/>
            <person name="Paulsen I.T."/>
            <person name="Heidelberg J.F."/>
            <person name="Holtzapple E.K."/>
            <person name="Khouri H.M."/>
            <person name="Federova N.B."/>
            <person name="Carty H.A."/>
            <person name="Umayam L.A."/>
            <person name="Haft D.H."/>
            <person name="Peterson J.D."/>
            <person name="Beanan M.J."/>
            <person name="White O."/>
            <person name="Salzberg S.L."/>
            <person name="Hsia R.-C."/>
            <person name="McClarty G."/>
            <person name="Rank R.G."/>
            <person name="Bavoil P.M."/>
            <person name="Fraser C.M."/>
        </authorList>
    </citation>
    <scope>NUCLEOTIDE SEQUENCE [LARGE SCALE GENOMIC DNA]</scope>
    <source>
        <strain>ATCC VR-813 / DSM 19441 / 03DC25 / GPIC</strain>
    </source>
</reference>
<evidence type="ECO:0000255" key="1">
    <source>
        <dbReference type="HAMAP-Rule" id="MF_00175"/>
    </source>
</evidence>
<evidence type="ECO:0000255" key="2">
    <source>
        <dbReference type="PROSITE-ProRule" id="PRU01250"/>
    </source>
</evidence>
<gene>
    <name evidence="1" type="primary">clpX</name>
    <name type="ordered locus">CCA_00921</name>
</gene>
<comment type="function">
    <text evidence="1">ATP-dependent specificity component of the Clp protease. It directs the protease to specific substrates. Can perform chaperone functions in the absence of ClpP.</text>
</comment>
<comment type="subunit">
    <text evidence="1">Component of the ClpX-ClpP complex. Forms a hexameric ring that, in the presence of ATP, binds to fourteen ClpP subunits assembled into a disk-like structure with a central cavity, resembling the structure of eukaryotic proteasomes.</text>
</comment>
<comment type="similarity">
    <text evidence="1">Belongs to the ClpX chaperone family.</text>
</comment>
<organism>
    <name type="scientific">Chlamydia caviae (strain ATCC VR-813 / DSM 19441 / 03DC25 / GPIC)</name>
    <name type="common">Chlamydophila caviae</name>
    <dbReference type="NCBI Taxonomy" id="227941"/>
    <lineage>
        <taxon>Bacteria</taxon>
        <taxon>Pseudomonadati</taxon>
        <taxon>Chlamydiota</taxon>
        <taxon>Chlamydiia</taxon>
        <taxon>Chlamydiales</taxon>
        <taxon>Chlamydiaceae</taxon>
        <taxon>Chlamydia/Chlamydophila group</taxon>
        <taxon>Chlamydia</taxon>
    </lineage>
</organism>
<dbReference type="EMBL" id="AE015925">
    <property type="protein sequence ID" value="AAP05660.1"/>
    <property type="molecule type" value="Genomic_DNA"/>
</dbReference>
<dbReference type="RefSeq" id="WP_011006873.1">
    <property type="nucleotide sequence ID" value="NC_003361.3"/>
</dbReference>
<dbReference type="SMR" id="Q821L9"/>
<dbReference type="STRING" id="227941.CCA_00921"/>
<dbReference type="KEGG" id="cca:CCA_00921"/>
<dbReference type="eggNOG" id="COG1219">
    <property type="taxonomic scope" value="Bacteria"/>
</dbReference>
<dbReference type="HOGENOM" id="CLU_014218_8_2_0"/>
<dbReference type="OrthoDB" id="9804062at2"/>
<dbReference type="Proteomes" id="UP000002193">
    <property type="component" value="Chromosome"/>
</dbReference>
<dbReference type="GO" id="GO:0009376">
    <property type="term" value="C:HslUV protease complex"/>
    <property type="evidence" value="ECO:0007669"/>
    <property type="project" value="TreeGrafter"/>
</dbReference>
<dbReference type="GO" id="GO:0005524">
    <property type="term" value="F:ATP binding"/>
    <property type="evidence" value="ECO:0007669"/>
    <property type="project" value="UniProtKB-UniRule"/>
</dbReference>
<dbReference type="GO" id="GO:0016887">
    <property type="term" value="F:ATP hydrolysis activity"/>
    <property type="evidence" value="ECO:0007669"/>
    <property type="project" value="InterPro"/>
</dbReference>
<dbReference type="GO" id="GO:0140662">
    <property type="term" value="F:ATP-dependent protein folding chaperone"/>
    <property type="evidence" value="ECO:0007669"/>
    <property type="project" value="InterPro"/>
</dbReference>
<dbReference type="GO" id="GO:0046983">
    <property type="term" value="F:protein dimerization activity"/>
    <property type="evidence" value="ECO:0007669"/>
    <property type="project" value="InterPro"/>
</dbReference>
<dbReference type="GO" id="GO:0051082">
    <property type="term" value="F:unfolded protein binding"/>
    <property type="evidence" value="ECO:0007669"/>
    <property type="project" value="UniProtKB-UniRule"/>
</dbReference>
<dbReference type="GO" id="GO:0008270">
    <property type="term" value="F:zinc ion binding"/>
    <property type="evidence" value="ECO:0007669"/>
    <property type="project" value="InterPro"/>
</dbReference>
<dbReference type="GO" id="GO:0051301">
    <property type="term" value="P:cell division"/>
    <property type="evidence" value="ECO:0007669"/>
    <property type="project" value="TreeGrafter"/>
</dbReference>
<dbReference type="GO" id="GO:0051603">
    <property type="term" value="P:proteolysis involved in protein catabolic process"/>
    <property type="evidence" value="ECO:0007669"/>
    <property type="project" value="TreeGrafter"/>
</dbReference>
<dbReference type="CDD" id="cd19497">
    <property type="entry name" value="RecA-like_ClpX"/>
    <property type="match status" value="1"/>
</dbReference>
<dbReference type="FunFam" id="1.10.8.60:FF:000002">
    <property type="entry name" value="ATP-dependent Clp protease ATP-binding subunit ClpX"/>
    <property type="match status" value="1"/>
</dbReference>
<dbReference type="FunFam" id="3.40.50.300:FF:000005">
    <property type="entry name" value="ATP-dependent Clp protease ATP-binding subunit ClpX"/>
    <property type="match status" value="1"/>
</dbReference>
<dbReference type="Gene3D" id="1.10.8.60">
    <property type="match status" value="1"/>
</dbReference>
<dbReference type="Gene3D" id="6.20.220.10">
    <property type="entry name" value="ClpX chaperone, C4-type zinc finger domain"/>
    <property type="match status" value="1"/>
</dbReference>
<dbReference type="Gene3D" id="3.40.50.300">
    <property type="entry name" value="P-loop containing nucleotide triphosphate hydrolases"/>
    <property type="match status" value="1"/>
</dbReference>
<dbReference type="HAMAP" id="MF_00175">
    <property type="entry name" value="ClpX"/>
    <property type="match status" value="1"/>
</dbReference>
<dbReference type="InterPro" id="IPR003593">
    <property type="entry name" value="AAA+_ATPase"/>
</dbReference>
<dbReference type="InterPro" id="IPR050052">
    <property type="entry name" value="ATP-dep_Clp_protease_ClpX"/>
</dbReference>
<dbReference type="InterPro" id="IPR003959">
    <property type="entry name" value="ATPase_AAA_core"/>
</dbReference>
<dbReference type="InterPro" id="IPR019489">
    <property type="entry name" value="Clp_ATPase_C"/>
</dbReference>
<dbReference type="InterPro" id="IPR004487">
    <property type="entry name" value="Clp_protease_ATP-bd_su_ClpX"/>
</dbReference>
<dbReference type="InterPro" id="IPR046425">
    <property type="entry name" value="ClpX_bact"/>
</dbReference>
<dbReference type="InterPro" id="IPR027417">
    <property type="entry name" value="P-loop_NTPase"/>
</dbReference>
<dbReference type="InterPro" id="IPR010603">
    <property type="entry name" value="Znf_CppX_C4"/>
</dbReference>
<dbReference type="InterPro" id="IPR038366">
    <property type="entry name" value="Znf_CppX_C4_sf"/>
</dbReference>
<dbReference type="NCBIfam" id="TIGR00382">
    <property type="entry name" value="clpX"/>
    <property type="match status" value="1"/>
</dbReference>
<dbReference type="NCBIfam" id="NF003745">
    <property type="entry name" value="PRK05342.1"/>
    <property type="match status" value="1"/>
</dbReference>
<dbReference type="PANTHER" id="PTHR48102:SF7">
    <property type="entry name" value="ATP-DEPENDENT CLP PROTEASE ATP-BINDING SUBUNIT CLPX-LIKE, MITOCHONDRIAL"/>
    <property type="match status" value="1"/>
</dbReference>
<dbReference type="PANTHER" id="PTHR48102">
    <property type="entry name" value="ATP-DEPENDENT CLP PROTEASE ATP-BINDING SUBUNIT CLPX-LIKE, MITOCHONDRIAL-RELATED"/>
    <property type="match status" value="1"/>
</dbReference>
<dbReference type="Pfam" id="PF07724">
    <property type="entry name" value="AAA_2"/>
    <property type="match status" value="1"/>
</dbReference>
<dbReference type="Pfam" id="PF10431">
    <property type="entry name" value="ClpB_D2-small"/>
    <property type="match status" value="1"/>
</dbReference>
<dbReference type="Pfam" id="PF06689">
    <property type="entry name" value="zf-C4_ClpX"/>
    <property type="match status" value="1"/>
</dbReference>
<dbReference type="SMART" id="SM00382">
    <property type="entry name" value="AAA"/>
    <property type="match status" value="1"/>
</dbReference>
<dbReference type="SMART" id="SM01086">
    <property type="entry name" value="ClpB_D2-small"/>
    <property type="match status" value="1"/>
</dbReference>
<dbReference type="SMART" id="SM00994">
    <property type="entry name" value="zf-C4_ClpX"/>
    <property type="match status" value="1"/>
</dbReference>
<dbReference type="SUPFAM" id="SSF57716">
    <property type="entry name" value="Glucocorticoid receptor-like (DNA-binding domain)"/>
    <property type="match status" value="1"/>
</dbReference>
<dbReference type="SUPFAM" id="SSF52540">
    <property type="entry name" value="P-loop containing nucleoside triphosphate hydrolases"/>
    <property type="match status" value="1"/>
</dbReference>
<dbReference type="PROSITE" id="PS51902">
    <property type="entry name" value="CLPX_ZB"/>
    <property type="match status" value="1"/>
</dbReference>
<accession>Q821L9</accession>
<keyword id="KW-0067">ATP-binding</keyword>
<keyword id="KW-0143">Chaperone</keyword>
<keyword id="KW-0479">Metal-binding</keyword>
<keyword id="KW-0547">Nucleotide-binding</keyword>
<keyword id="KW-0862">Zinc</keyword>
<sequence>MNKKNLTICSFCGRSEKDVEKLIAGPSVYICDYCIKLCSGILDKKPTSTPSSGTPTETTPQHSDLQVLTPKEIKKHIDKYVVGQERAKKTIAVAVYNHYKRIRALLNNKHVSYGKSNVLLLGPTGSGKTLIAKTLAKILDVPFTIADATTLTEAGYVGEDVENIVLRLLQAADYNVARAERGIIYIDEIDKIGRTTANVSITRDVSGEGVQQALLKIIEGTTANVPPKGGRKHPNQEYIRVNTENILFIVGGAFVNLDKIIAKRLGKTTIGFSDDLGDFSQEDRDHLLTKVETEDLIAFGMIPEFVGRFNCIVNCEELSLDELVAILTEPTNAIVKQYIELFSEENVKLIFEKDALYAIAKKAKLAKTGARALGMILENLLRDLMFEIPSDPTVEAIRIQEDTILENKAPVIIRRTPEAIA</sequence>
<name>CLPX_CHLCV</name>
<feature type="chain" id="PRO_0000160336" description="ATP-dependent Clp protease ATP-binding subunit ClpX">
    <location>
        <begin position="1"/>
        <end position="421"/>
    </location>
</feature>
<feature type="domain" description="ClpX-type ZB" evidence="2">
    <location>
        <begin position="1"/>
        <end position="50"/>
    </location>
</feature>
<feature type="binding site" evidence="2">
    <location>
        <position position="9"/>
    </location>
    <ligand>
        <name>Zn(2+)</name>
        <dbReference type="ChEBI" id="CHEBI:29105"/>
    </ligand>
</feature>
<feature type="binding site" evidence="2">
    <location>
        <position position="12"/>
    </location>
    <ligand>
        <name>Zn(2+)</name>
        <dbReference type="ChEBI" id="CHEBI:29105"/>
    </ligand>
</feature>
<feature type="binding site" evidence="2">
    <location>
        <position position="31"/>
    </location>
    <ligand>
        <name>Zn(2+)</name>
        <dbReference type="ChEBI" id="CHEBI:29105"/>
    </ligand>
</feature>
<feature type="binding site" evidence="2">
    <location>
        <position position="34"/>
    </location>
    <ligand>
        <name>Zn(2+)</name>
        <dbReference type="ChEBI" id="CHEBI:29105"/>
    </ligand>
</feature>
<feature type="binding site" evidence="1">
    <location>
        <begin position="123"/>
        <end position="130"/>
    </location>
    <ligand>
        <name>ATP</name>
        <dbReference type="ChEBI" id="CHEBI:30616"/>
    </ligand>
</feature>
<proteinExistence type="inferred from homology"/>
<protein>
    <recommendedName>
        <fullName evidence="1">ATP-dependent Clp protease ATP-binding subunit ClpX</fullName>
    </recommendedName>
</protein>